<proteinExistence type="inferred from homology"/>
<comment type="function">
    <text evidence="1">A replicative DNA helicase, it participates in initiation and elongation during DNA replication. Travels ahead of the DNA replisome, separating dsDNA into templates for DNA synthesis. A processive ATP-dependent 5'-3' DNA helicase it has DNA-dependent ATPase activity.</text>
</comment>
<comment type="function">
    <text evidence="4">The plasmid this protein is encoded on is thought to be required for growth within mammalian cells.</text>
</comment>
<comment type="catalytic activity">
    <reaction evidence="1">
        <text>Couples ATP hydrolysis with the unwinding of duplex DNA at the replication fork by translocating in the 5'-3' direction. This creates two antiparallel DNA single strands (ssDNA). The leading ssDNA polymer is the template for DNA polymerase III holoenzyme which synthesizes a continuous strand.</text>
        <dbReference type="EC" id="5.6.2.3"/>
    </reaction>
</comment>
<comment type="catalytic activity">
    <reaction evidence="1">
        <text>ATP + H2O = ADP + phosphate + H(+)</text>
        <dbReference type="Rhea" id="RHEA:13065"/>
        <dbReference type="ChEBI" id="CHEBI:15377"/>
        <dbReference type="ChEBI" id="CHEBI:15378"/>
        <dbReference type="ChEBI" id="CHEBI:30616"/>
        <dbReference type="ChEBI" id="CHEBI:43474"/>
        <dbReference type="ChEBI" id="CHEBI:456216"/>
        <dbReference type="EC" id="5.6.2.3"/>
    </reaction>
</comment>
<comment type="subunit">
    <text evidence="1">Homohexamer.</text>
</comment>
<comment type="similarity">
    <text evidence="3">Belongs to the helicase family. DnaB subfamily.</text>
</comment>
<comment type="sequence caution" evidence="3">
    <conflict type="frameshift">
        <sequence resource="EMBL-CDS" id="AAB02586"/>
    </conflict>
</comment>
<comment type="sequence caution" evidence="3">
    <conflict type="frameshift">
        <sequence resource="EMBL-CDS" id="CAA68558"/>
    </conflict>
</comment>
<organism>
    <name type="scientific">Chlamydia trachomatis</name>
    <dbReference type="NCBI Taxonomy" id="813"/>
    <lineage>
        <taxon>Bacteria</taxon>
        <taxon>Pseudomonadati</taxon>
        <taxon>Chlamydiota</taxon>
        <taxon>Chlamydiia</taxon>
        <taxon>Chlamydiales</taxon>
        <taxon>Chlamydiaceae</taxon>
        <taxon>Chlamydia/Chlamydophila group</taxon>
        <taxon>Chlamydia</taxon>
    </lineage>
</organism>
<evidence type="ECO:0000250" key="1">
    <source>
        <dbReference type="UniProtKB" id="P0ACB0"/>
    </source>
</evidence>
<evidence type="ECO:0000255" key="2">
    <source>
        <dbReference type="PROSITE-ProRule" id="PRU00596"/>
    </source>
</evidence>
<evidence type="ECO:0000305" key="3"/>
<evidence type="ECO:0000305" key="4">
    <source>
    </source>
</evidence>
<feature type="chain" id="PRO_0000102038" description="Probable plasmid replicative DNA helicase">
    <location>
        <begin position="1"/>
        <end position="451"/>
    </location>
</feature>
<feature type="domain" description="SF4 helicase" evidence="2">
    <location>
        <begin position="194"/>
        <end position="451"/>
    </location>
</feature>
<feature type="binding site" evidence="2">
    <location>
        <begin position="225"/>
        <end position="232"/>
    </location>
    <ligand>
        <name>ATP</name>
        <dbReference type="ChEBI" id="CHEBI:30616"/>
    </ligand>
</feature>
<feature type="sequence variant" description="In plasmid pCHL1.">
    <original>Y</original>
    <variation>H</variation>
    <location>
        <position position="55"/>
    </location>
</feature>
<feature type="sequence variant" description="In plasmid pCHL1.">
    <original>A</original>
    <variation>V</variation>
    <location>
        <position position="188"/>
    </location>
</feature>
<feature type="sequence variant" description="In plasmid pCHL1 and plasmid pCTT1.">
    <original>T</original>
    <variation>A</variation>
    <location>
        <position position="189"/>
    </location>
</feature>
<feature type="sequence variant" description="In plasmid pCHL1 and plasmid pCTT1.">
    <original>A</original>
    <variation>G</variation>
    <location>
        <position position="200"/>
    </location>
</feature>
<feature type="sequence variant" description="In plasmid pCTT1.">
    <original>I</original>
    <variation>V</variation>
    <location>
        <position position="267"/>
    </location>
</feature>
<accession>P0CE16</accession>
<accession>P08781</accession>
<accession>P10555</accession>
<accession>P22445</accession>
<reference key="1">
    <citation type="journal article" date="1988" name="Nucleic Acids Res.">
        <title>Analysis of the entire nucleotide sequence of the cryptic plasmid of Chlamydia trachomatis serovar L1. Evidence for involvement in DNA replication.</title>
        <authorList>
            <person name="Hatt C."/>
            <person name="Ward M.E."/>
            <person name="Clarke I.N."/>
        </authorList>
    </citation>
    <scope>NUCLEOTIDE SEQUENCE [GENOMIC DNA]</scope>
    <source>
        <strain>L1/440/LN</strain>
        <plasmid>pLGV440</plasmid>
    </source>
</reference>
<reference key="2">
    <citation type="journal article" date="1990" name="Plasmid">
        <title>Diversity of the Chlamydia trachomatis common plasmid in biovars with different pathogenicity.</title>
        <authorList>
            <person name="Comanducci M."/>
            <person name="Ricci S."/>
            <person name="Cevenini R."/>
            <person name="Ratti G."/>
        </authorList>
    </citation>
    <scope>NUCLEOTIDE SEQUENCE [GENOMIC DNA]</scope>
    <source>
        <strain>D/GO/86</strain>
        <plasmid>pCHL1</plasmid>
    </source>
</reference>
<reference key="3">
    <citation type="journal article" date="1987" name="Plasmid">
        <title>Characterization and sequence of a plasmid from the trachoma biovar of Chlamydia trachomatis.</title>
        <authorList>
            <person name="Sriprakash K.S."/>
            <person name="Macavoy E.S."/>
        </authorList>
    </citation>
    <scope>NUCLEOTIDE SEQUENCE [GENOMIC DNA]</scope>
    <source>
        <strain>Serotype B</strain>
        <plasmid>pCTT1</plasmid>
    </source>
</reference>
<reference key="4">
    <citation type="journal article" date="1987" name="Nucleic Acids Res.">
        <title>A gene for dnaB like protein in chlamydial plasmid.</title>
        <authorList>
            <person name="Sriprakash K.S."/>
            <person name="Macavoy E.S."/>
        </authorList>
    </citation>
    <scope>NUCLEOTIDE SEQUENCE [GENOMIC DNA] OF 1-407</scope>
    <source>
        <strain>Serotype B</strain>
        <plasmid>pCTT1</plasmid>
    </source>
</reference>
<geneLocation type="plasmid">
    <name>pLGV440</name>
</geneLocation>
<geneLocation type="plasmid">
    <name>pCHL1</name>
</geneLocation>
<geneLocation type="plasmid">
    <name>pCTT1</name>
</geneLocation>
<keyword id="KW-0067">ATP-binding</keyword>
<keyword id="KW-0235">DNA replication</keyword>
<keyword id="KW-0238">DNA-binding</keyword>
<keyword id="KW-0347">Helicase</keyword>
<keyword id="KW-0378">Hydrolase</keyword>
<keyword id="KW-0413">Isomerase</keyword>
<keyword id="KW-0547">Nucleotide-binding</keyword>
<keyword id="KW-0614">Plasmid</keyword>
<keyword id="KW-0639">Primosome</keyword>
<protein>
    <recommendedName>
        <fullName>Probable plasmid replicative DNA helicase</fullName>
        <ecNumber evidence="1">5.6.2.3</ecNumber>
    </recommendedName>
    <alternativeName>
        <fullName evidence="3">DNA 5'-3' helicase pGP1-D</fullName>
    </alternativeName>
    <alternativeName>
        <fullName>DnaB-like protein</fullName>
    </alternativeName>
    <alternativeName>
        <fullName>Protein P-3</fullName>
    </alternativeName>
    <alternativeName>
        <fullName>Virulence plasmid protein pGP1-D</fullName>
    </alternativeName>
</protein>
<dbReference type="EC" id="5.6.2.3" evidence="1"/>
<dbReference type="EMBL" id="X06707">
    <property type="protein sequence ID" value="CAA29892.1"/>
    <property type="molecule type" value="Genomic_DNA"/>
</dbReference>
<dbReference type="EMBL" id="J03321">
    <property type="protein sequence ID" value="AAA91569.1"/>
    <property type="molecule type" value="Genomic_DNA"/>
</dbReference>
<dbReference type="EMBL" id="M19487">
    <property type="protein sequence ID" value="AAB02586.1"/>
    <property type="status" value="ALT_FRAME"/>
    <property type="molecule type" value="Genomic_DNA"/>
</dbReference>
<dbReference type="EMBL" id="Y00505">
    <property type="protein sequence ID" value="CAA68558.1"/>
    <property type="status" value="ALT_FRAME"/>
    <property type="molecule type" value="Genomic_DNA"/>
</dbReference>
<dbReference type="PIR" id="A37386">
    <property type="entry name" value="A37386"/>
</dbReference>
<dbReference type="PIR" id="S01921">
    <property type="entry name" value="S01921"/>
</dbReference>
<dbReference type="PIR" id="S06324">
    <property type="entry name" value="S06324"/>
</dbReference>
<dbReference type="RefSeq" id="NP_040382.1">
    <property type="nucleotide sequence ID" value="NC_001372.1"/>
</dbReference>
<dbReference type="RefSeq" id="WP_010889884.1">
    <property type="nucleotide sequence ID" value="NC_001372.1"/>
</dbReference>
<dbReference type="RefSeq" id="WP_012209814.1">
    <property type="nucleotide sequence ID" value="NZ_CP106986.1"/>
</dbReference>
<dbReference type="RefSeq" id="YP_001569036.1">
    <property type="nucleotide sequence ID" value="NC_010029.2"/>
</dbReference>
<dbReference type="RefSeq" id="YP_001654084.1">
    <property type="nucleotide sequence ID" value="NC_010286.1"/>
</dbReference>
<dbReference type="SMR" id="P0CE16"/>
<dbReference type="OMA" id="YLEHAHT"/>
<dbReference type="GO" id="GO:0005829">
    <property type="term" value="C:cytosol"/>
    <property type="evidence" value="ECO:0007669"/>
    <property type="project" value="TreeGrafter"/>
</dbReference>
<dbReference type="GO" id="GO:1990077">
    <property type="term" value="C:primosome complex"/>
    <property type="evidence" value="ECO:0007669"/>
    <property type="project" value="UniProtKB-KW"/>
</dbReference>
<dbReference type="GO" id="GO:0005524">
    <property type="term" value="F:ATP binding"/>
    <property type="evidence" value="ECO:0007669"/>
    <property type="project" value="UniProtKB-KW"/>
</dbReference>
<dbReference type="GO" id="GO:0016887">
    <property type="term" value="F:ATP hydrolysis activity"/>
    <property type="evidence" value="ECO:0007669"/>
    <property type="project" value="InterPro"/>
</dbReference>
<dbReference type="GO" id="GO:0003677">
    <property type="term" value="F:DNA binding"/>
    <property type="evidence" value="ECO:0007669"/>
    <property type="project" value="UniProtKB-KW"/>
</dbReference>
<dbReference type="GO" id="GO:0003678">
    <property type="term" value="F:DNA helicase activity"/>
    <property type="evidence" value="ECO:0007669"/>
    <property type="project" value="InterPro"/>
</dbReference>
<dbReference type="GO" id="GO:0006269">
    <property type="term" value="P:DNA replication, synthesis of primer"/>
    <property type="evidence" value="ECO:0007669"/>
    <property type="project" value="UniProtKB-KW"/>
</dbReference>
<dbReference type="CDD" id="cd00984">
    <property type="entry name" value="DnaB_C"/>
    <property type="match status" value="1"/>
</dbReference>
<dbReference type="Gene3D" id="3.40.50.300">
    <property type="entry name" value="P-loop containing nucleotide triphosphate hydrolases"/>
    <property type="match status" value="1"/>
</dbReference>
<dbReference type="InterPro" id="IPR003593">
    <property type="entry name" value="AAA+_ATPase"/>
</dbReference>
<dbReference type="InterPro" id="IPR036185">
    <property type="entry name" value="DNA_heli_DnaB-like_N_sf"/>
</dbReference>
<dbReference type="InterPro" id="IPR007694">
    <property type="entry name" value="DNA_helicase_DnaB-like_C"/>
</dbReference>
<dbReference type="InterPro" id="IPR007693">
    <property type="entry name" value="DNA_helicase_DnaB-like_N"/>
</dbReference>
<dbReference type="InterPro" id="IPR027417">
    <property type="entry name" value="P-loop_NTPase"/>
</dbReference>
<dbReference type="PANTHER" id="PTHR30153:SF2">
    <property type="entry name" value="REPLICATIVE DNA HELICASE"/>
    <property type="match status" value="1"/>
</dbReference>
<dbReference type="PANTHER" id="PTHR30153">
    <property type="entry name" value="REPLICATIVE DNA HELICASE DNAB"/>
    <property type="match status" value="1"/>
</dbReference>
<dbReference type="Pfam" id="PF00772">
    <property type="entry name" value="DnaB"/>
    <property type="match status" value="1"/>
</dbReference>
<dbReference type="Pfam" id="PF03796">
    <property type="entry name" value="DnaB_C"/>
    <property type="match status" value="1"/>
</dbReference>
<dbReference type="SMART" id="SM00382">
    <property type="entry name" value="AAA"/>
    <property type="match status" value="1"/>
</dbReference>
<dbReference type="SUPFAM" id="SSF48024">
    <property type="entry name" value="N-terminal domain of DnaB helicase"/>
    <property type="match status" value="1"/>
</dbReference>
<dbReference type="SUPFAM" id="SSF52540">
    <property type="entry name" value="P-loop containing nucleoside triphosphate hydrolases"/>
    <property type="match status" value="1"/>
</dbReference>
<dbReference type="PROSITE" id="PS51199">
    <property type="entry name" value="SF4_HELICASE"/>
    <property type="match status" value="1"/>
</dbReference>
<sequence length="451" mass="51457">MKTRSEIENRMQDIEYALLGKALIFEDSTEYILRQLANYEFKCSHHKNIFIVFKYLKDNGLPITVDSAWEELLRRRIKDMDKSYLGLMLHDALSNDKLRSVSHTVFLDDLSVCSAEENLSNFIFRSFNEYNENPLRRSPFLLLERIKGRLDSAIAKTFSIRSARGRSIYDIFSQSEIGVLARIKKRRATFSENQNSFFDAFPTGYKDIDDKGVILAKGNFVIIAARPSIGKTALAIDMAINLAVTQQRRVGFLSLEMSAGQIVERIIANLTGISGEKLQRGDLSKEELFRVEEAGETVRESHFYICSDSQYKLNLIANQIRLLRKEDRVDVIFIDYLQLINSSVGENRQNEIADISRTLRGLASELNIPIVCLSQLSRKVEDRANKVPMLSDLRDSGQIEQDADVILFINRKESSSNCEITVGKNRHGSVFSSVLHFDPKISKFSAIKKVW</sequence>
<name>GP1D_CHLTH</name>